<reference key="1">
    <citation type="journal article" date="2006" name="Nature">
        <title>The DNA sequence and biological annotation of human chromosome 1.</title>
        <authorList>
            <person name="Gregory S.G."/>
            <person name="Barlow K.F."/>
            <person name="McLay K.E."/>
            <person name="Kaul R."/>
            <person name="Swarbreck D."/>
            <person name="Dunham A."/>
            <person name="Scott C.E."/>
            <person name="Howe K.L."/>
            <person name="Woodfine K."/>
            <person name="Spencer C.C.A."/>
            <person name="Jones M.C."/>
            <person name="Gillson C."/>
            <person name="Searle S."/>
            <person name="Zhou Y."/>
            <person name="Kokocinski F."/>
            <person name="McDonald L."/>
            <person name="Evans R."/>
            <person name="Phillips K."/>
            <person name="Atkinson A."/>
            <person name="Cooper R."/>
            <person name="Jones C."/>
            <person name="Hall R.E."/>
            <person name="Andrews T.D."/>
            <person name="Lloyd C."/>
            <person name="Ainscough R."/>
            <person name="Almeida J.P."/>
            <person name="Ambrose K.D."/>
            <person name="Anderson F."/>
            <person name="Andrew R.W."/>
            <person name="Ashwell R.I.S."/>
            <person name="Aubin K."/>
            <person name="Babbage A.K."/>
            <person name="Bagguley C.L."/>
            <person name="Bailey J."/>
            <person name="Beasley H."/>
            <person name="Bethel G."/>
            <person name="Bird C.P."/>
            <person name="Bray-Allen S."/>
            <person name="Brown J.Y."/>
            <person name="Brown A.J."/>
            <person name="Buckley D."/>
            <person name="Burton J."/>
            <person name="Bye J."/>
            <person name="Carder C."/>
            <person name="Chapman J.C."/>
            <person name="Clark S.Y."/>
            <person name="Clarke G."/>
            <person name="Clee C."/>
            <person name="Cobley V."/>
            <person name="Collier R.E."/>
            <person name="Corby N."/>
            <person name="Coville G.J."/>
            <person name="Davies J."/>
            <person name="Deadman R."/>
            <person name="Dunn M."/>
            <person name="Earthrowl M."/>
            <person name="Ellington A.G."/>
            <person name="Errington H."/>
            <person name="Frankish A."/>
            <person name="Frankland J."/>
            <person name="French L."/>
            <person name="Garner P."/>
            <person name="Garnett J."/>
            <person name="Gay L."/>
            <person name="Ghori M.R.J."/>
            <person name="Gibson R."/>
            <person name="Gilby L.M."/>
            <person name="Gillett W."/>
            <person name="Glithero R.J."/>
            <person name="Grafham D.V."/>
            <person name="Griffiths C."/>
            <person name="Griffiths-Jones S."/>
            <person name="Grocock R."/>
            <person name="Hammond S."/>
            <person name="Harrison E.S.I."/>
            <person name="Hart E."/>
            <person name="Haugen E."/>
            <person name="Heath P.D."/>
            <person name="Holmes S."/>
            <person name="Holt K."/>
            <person name="Howden P.J."/>
            <person name="Hunt A.R."/>
            <person name="Hunt S.E."/>
            <person name="Hunter G."/>
            <person name="Isherwood J."/>
            <person name="James R."/>
            <person name="Johnson C."/>
            <person name="Johnson D."/>
            <person name="Joy A."/>
            <person name="Kay M."/>
            <person name="Kershaw J.K."/>
            <person name="Kibukawa M."/>
            <person name="Kimberley A.M."/>
            <person name="King A."/>
            <person name="Knights A.J."/>
            <person name="Lad H."/>
            <person name="Laird G."/>
            <person name="Lawlor S."/>
            <person name="Leongamornlert D.A."/>
            <person name="Lloyd D.M."/>
            <person name="Loveland J."/>
            <person name="Lovell J."/>
            <person name="Lush M.J."/>
            <person name="Lyne R."/>
            <person name="Martin S."/>
            <person name="Mashreghi-Mohammadi M."/>
            <person name="Matthews L."/>
            <person name="Matthews N.S.W."/>
            <person name="McLaren S."/>
            <person name="Milne S."/>
            <person name="Mistry S."/>
            <person name="Moore M.J.F."/>
            <person name="Nickerson T."/>
            <person name="O'Dell C.N."/>
            <person name="Oliver K."/>
            <person name="Palmeiri A."/>
            <person name="Palmer S.A."/>
            <person name="Parker A."/>
            <person name="Patel D."/>
            <person name="Pearce A.V."/>
            <person name="Peck A.I."/>
            <person name="Pelan S."/>
            <person name="Phelps K."/>
            <person name="Phillimore B.J."/>
            <person name="Plumb R."/>
            <person name="Rajan J."/>
            <person name="Raymond C."/>
            <person name="Rouse G."/>
            <person name="Saenphimmachak C."/>
            <person name="Sehra H.K."/>
            <person name="Sheridan E."/>
            <person name="Shownkeen R."/>
            <person name="Sims S."/>
            <person name="Skuce C.D."/>
            <person name="Smith M."/>
            <person name="Steward C."/>
            <person name="Subramanian S."/>
            <person name="Sycamore N."/>
            <person name="Tracey A."/>
            <person name="Tromans A."/>
            <person name="Van Helmond Z."/>
            <person name="Wall M."/>
            <person name="Wallis J.M."/>
            <person name="White S."/>
            <person name="Whitehead S.L."/>
            <person name="Wilkinson J.E."/>
            <person name="Willey D.L."/>
            <person name="Williams H."/>
            <person name="Wilming L."/>
            <person name="Wray P.W."/>
            <person name="Wu Z."/>
            <person name="Coulson A."/>
            <person name="Vaudin M."/>
            <person name="Sulston J.E."/>
            <person name="Durbin R.M."/>
            <person name="Hubbard T."/>
            <person name="Wooster R."/>
            <person name="Dunham I."/>
            <person name="Carter N.P."/>
            <person name="McVean G."/>
            <person name="Ross M.T."/>
            <person name="Harrow J."/>
            <person name="Olson M.V."/>
            <person name="Beck S."/>
            <person name="Rogers J."/>
            <person name="Bentley D.R."/>
        </authorList>
    </citation>
    <scope>NUCLEOTIDE SEQUENCE [LARGE SCALE GENOMIC DNA]</scope>
</reference>
<reference key="2">
    <citation type="journal article" date="2004" name="Genome Res.">
        <title>The status, quality, and expansion of the NIH full-length cDNA project: the Mammalian Gene Collection (MGC).</title>
        <authorList>
            <consortium name="The MGC Project Team"/>
        </authorList>
    </citation>
    <scope>NUCLEOTIDE SEQUENCE [LARGE SCALE MRNA] (ISOFORM 2)</scope>
    <source>
        <tissue>Brain</tissue>
    </source>
</reference>
<reference key="3">
    <citation type="submission" date="2005-02" db="PDB data bank">
        <title>Novel ubiquitin-conjugating enzyme.</title>
        <authorList>
            <person name="Avvakumov G.V."/>
            <person name="Walker J.R."/>
            <person name="Choe J."/>
            <person name="Newman E.M."/>
            <person name="MacKenzie F."/>
            <person name="Bochkarev A."/>
            <person name="Dhe-Paganon S."/>
        </authorList>
    </citation>
    <scope>X-RAY CRYSTALLOGRAPHY (2.18 ANGSTROMS) OF 1-150</scope>
</reference>
<reference evidence="6" key="4">
    <citation type="journal article" date="2012" name="Mol. Cell. Proteomics">
        <title>A human ubiquitin conjugating enzyme (E2)-HECT E3 ligase structure-function screen.</title>
        <authorList>
            <person name="Sheng Y."/>
            <person name="Hong J.H."/>
            <person name="Doherty R."/>
            <person name="Srikumar T."/>
            <person name="Shloush J."/>
            <person name="Avvakumov G.V."/>
            <person name="Walker J.R."/>
            <person name="Xue S."/>
            <person name="Neculai D."/>
            <person name="Wan J.W."/>
            <person name="Kim S.K."/>
            <person name="Arrowsmith C.H."/>
            <person name="Raught B."/>
            <person name="Dhe-Paganon S."/>
        </authorList>
    </citation>
    <scope>X-RAY CRYSTALLOGRAPHY (2.18 ANGSTROMS) OF 1-150</scope>
    <scope>FUNCTION</scope>
    <scope>AUTOUBIQUITINATION</scope>
</reference>
<proteinExistence type="evidence at protein level"/>
<evidence type="ECO:0000255" key="1">
    <source>
        <dbReference type="PROSITE-ProRule" id="PRU00388"/>
    </source>
</evidence>
<evidence type="ECO:0000255" key="2">
    <source>
        <dbReference type="PROSITE-ProRule" id="PRU10133"/>
    </source>
</evidence>
<evidence type="ECO:0000256" key="3">
    <source>
        <dbReference type="SAM" id="MobiDB-lite"/>
    </source>
</evidence>
<evidence type="ECO:0000269" key="4">
    <source>
    </source>
</evidence>
<evidence type="ECO:0000303" key="5">
    <source>
    </source>
</evidence>
<evidence type="ECO:0007744" key="6">
    <source>
        <dbReference type="PDB" id="1YRV"/>
    </source>
</evidence>
<evidence type="ECO:0007829" key="7">
    <source>
        <dbReference type="PDB" id="1YRV"/>
    </source>
</evidence>
<gene>
    <name type="primary">UBE2U</name>
</gene>
<keyword id="KW-0002">3D-structure</keyword>
<keyword id="KW-0025">Alternative splicing</keyword>
<keyword id="KW-0067">ATP-binding</keyword>
<keyword id="KW-0547">Nucleotide-binding</keyword>
<keyword id="KW-1267">Proteomics identification</keyword>
<keyword id="KW-1185">Reference proteome</keyword>
<keyword id="KW-0808">Transferase</keyword>
<keyword id="KW-0832">Ubl conjugation</keyword>
<keyword id="KW-0833">Ubl conjugation pathway</keyword>
<sequence length="321" mass="37741">MHGRAYLLLHRDFCDLKENNYKGITAKPVSEDMMEWEVEIEGLQNSVWQGLVFQLTIHFTSEYNYAPPVVKFITIPFHPNVDPHTGQPCIDFLDNPEKWNTNYTLSSILLALQVMLSNPVLENPVNLEAARILVKDESLYRTILRLFNRPLQMKDDSQELPKDPRKCIRPIKTTSFSDYYQTWSRIATSKATEYYRTPLLKVPNFIGQYYKWKKMDLQHQKEWNLKYSVIKCWLARKRMPHEVTHSMEEIKLCPTLIPTTDEIFLESPTAINSITDIYETEEEGWKSDTSLYENDTDEPREEEVEDLISWTNTLNTNTSED</sequence>
<organism>
    <name type="scientific">Homo sapiens</name>
    <name type="common">Human</name>
    <dbReference type="NCBI Taxonomy" id="9606"/>
    <lineage>
        <taxon>Eukaryota</taxon>
        <taxon>Metazoa</taxon>
        <taxon>Chordata</taxon>
        <taxon>Craniata</taxon>
        <taxon>Vertebrata</taxon>
        <taxon>Euteleostomi</taxon>
        <taxon>Mammalia</taxon>
        <taxon>Eutheria</taxon>
        <taxon>Euarchontoglires</taxon>
        <taxon>Primates</taxon>
        <taxon>Haplorrhini</taxon>
        <taxon>Catarrhini</taxon>
        <taxon>Hominidae</taxon>
        <taxon>Homo</taxon>
    </lineage>
</organism>
<protein>
    <recommendedName>
        <fullName>Ubiquitin-conjugating enzyme E2 U</fullName>
        <ecNumber>2.3.2.23</ecNumber>
    </recommendedName>
    <alternativeName>
        <fullName>E2 ubiquitin-conjugating enzyme U</fullName>
    </alternativeName>
    <alternativeName>
        <fullName>Ubiquitin carrier protein U</fullName>
    </alternativeName>
    <alternativeName>
        <fullName>Ubiquitin-protein ligase U</fullName>
    </alternativeName>
</protein>
<name>UBE2U_HUMAN</name>
<feature type="chain" id="PRO_0000082512" description="Ubiquitin-conjugating enzyme E2 U">
    <location>
        <begin position="1"/>
        <end position="321"/>
    </location>
</feature>
<feature type="domain" description="UBC core" evidence="1">
    <location>
        <begin position="4"/>
        <end position="153"/>
    </location>
</feature>
<feature type="region of interest" description="Disordered" evidence="3">
    <location>
        <begin position="285"/>
        <end position="321"/>
    </location>
</feature>
<feature type="compositionally biased region" description="Acidic residues" evidence="3">
    <location>
        <begin position="294"/>
        <end position="306"/>
    </location>
</feature>
<feature type="compositionally biased region" description="Polar residues" evidence="3">
    <location>
        <begin position="309"/>
        <end position="321"/>
    </location>
</feature>
<feature type="active site" description="Glycyl thioester intermediate" evidence="1 2">
    <location>
        <position position="89"/>
    </location>
</feature>
<feature type="splice variant" id="VSP_016003" description="In isoform 2." evidence="5">
    <location>
        <begin position="227"/>
        <end position="321"/>
    </location>
</feature>
<feature type="sequence variant" id="VAR_057323" description="In dbSNP:rs7532933.">
    <original>I</original>
    <variation>T</variation>
    <location>
        <position position="90"/>
    </location>
</feature>
<feature type="helix" evidence="7">
    <location>
        <begin position="4"/>
        <end position="19"/>
    </location>
</feature>
<feature type="strand" evidence="7">
    <location>
        <begin position="24"/>
        <end position="28"/>
    </location>
</feature>
<feature type="strand" evidence="7">
    <location>
        <begin position="35"/>
        <end position="41"/>
    </location>
</feature>
<feature type="turn" evidence="7">
    <location>
        <begin position="47"/>
        <end position="50"/>
    </location>
</feature>
<feature type="strand" evidence="7">
    <location>
        <begin position="52"/>
        <end position="58"/>
    </location>
</feature>
<feature type="strand" evidence="7">
    <location>
        <begin position="69"/>
        <end position="74"/>
    </location>
</feature>
<feature type="turn" evidence="7">
    <location>
        <begin position="83"/>
        <end position="85"/>
    </location>
</feature>
<feature type="helix" evidence="7">
    <location>
        <begin position="91"/>
        <end position="94"/>
    </location>
</feature>
<feature type="helix" evidence="7">
    <location>
        <begin position="96"/>
        <end position="98"/>
    </location>
</feature>
<feature type="helix" evidence="7">
    <location>
        <begin position="105"/>
        <end position="116"/>
    </location>
</feature>
<feature type="helix" evidence="7">
    <location>
        <begin position="127"/>
        <end position="134"/>
    </location>
</feature>
<feature type="helix" evidence="7">
    <location>
        <begin position="137"/>
        <end position="147"/>
    </location>
</feature>
<comment type="function">
    <text evidence="4">Catalyzes the covalent attachment of ubiquitin to other proteins.</text>
</comment>
<comment type="catalytic activity">
    <reaction evidence="1 2">
        <text>S-ubiquitinyl-[E1 ubiquitin-activating enzyme]-L-cysteine + [E2 ubiquitin-conjugating enzyme]-L-cysteine = [E1 ubiquitin-activating enzyme]-L-cysteine + S-ubiquitinyl-[E2 ubiquitin-conjugating enzyme]-L-cysteine.</text>
        <dbReference type="EC" id="2.3.2.23"/>
    </reaction>
</comment>
<comment type="pathway">
    <text evidence="1">Protein modification; protein ubiquitination.</text>
</comment>
<comment type="interaction">
    <interactant intactId="EBI-2130181">
        <id>Q5VVX9</id>
    </interactant>
    <interactant intactId="EBI-618309">
        <id>Q08379</id>
        <label>GOLGA2</label>
    </interactant>
    <organismsDiffer>false</organismsDiffer>
    <experiments>4</experiments>
</comment>
<comment type="interaction">
    <interactant intactId="EBI-2130181">
        <id>Q5VVX9</id>
    </interactant>
    <interactant intactId="EBI-742790">
        <id>Q13049</id>
        <label>TRIM32</label>
    </interactant>
    <organismsDiffer>false</organismsDiffer>
    <experiments>4</experiments>
</comment>
<comment type="interaction">
    <interactant intactId="EBI-21897992">
        <id>Q5VVX9-2</id>
    </interactant>
    <interactant intactId="EBI-356942">
        <id>P62879</id>
        <label>GNB2</label>
    </interactant>
    <organismsDiffer>false</organismsDiffer>
    <experiments>3</experiments>
</comment>
<comment type="interaction">
    <interactant intactId="EBI-21897992">
        <id>Q5VVX9-2</id>
    </interactant>
    <interactant intactId="EBI-12157263">
        <id>P40337-2</id>
        <label>VHL</label>
    </interactant>
    <organismsDiffer>false</organismsDiffer>
    <experiments>3</experiments>
</comment>
<comment type="alternative products">
    <event type="alternative splicing"/>
    <isoform>
        <id>Q5VVX9-1</id>
        <name>1</name>
        <sequence type="displayed"/>
    </isoform>
    <isoform>
        <id>Q5VVX9-2</id>
        <name>2</name>
        <sequence type="described" ref="VSP_016003"/>
    </isoform>
</comment>
<comment type="PTM">
    <text evidence="4">Autoubiquitinated in vitro in the presence of UBR5.</text>
</comment>
<comment type="similarity">
    <text evidence="1">Belongs to the ubiquitin-conjugating enzyme family.</text>
</comment>
<accession>Q5VVX9</accession>
<accession>Q8N1D4</accession>
<dbReference type="EC" id="2.3.2.23"/>
<dbReference type="EMBL" id="AL445205">
    <property type="status" value="NOT_ANNOTATED_CDS"/>
    <property type="molecule type" value="Genomic_DNA"/>
</dbReference>
<dbReference type="EMBL" id="AL161916">
    <property type="status" value="NOT_ANNOTATED_CDS"/>
    <property type="molecule type" value="Genomic_DNA"/>
</dbReference>
<dbReference type="EMBL" id="BC029895">
    <property type="protein sequence ID" value="AAH29895.1"/>
    <property type="molecule type" value="mRNA"/>
</dbReference>
<dbReference type="CCDS" id="CCDS627.1">
    <molecule id="Q5VVX9-2"/>
</dbReference>
<dbReference type="RefSeq" id="NP_689702.1">
    <molecule id="Q5VVX9-2"/>
    <property type="nucleotide sequence ID" value="NM_152489.3"/>
</dbReference>
<dbReference type="PDB" id="1YRV">
    <property type="method" value="X-ray"/>
    <property type="resolution" value="2.18 A"/>
    <property type="chains" value="A=1-150"/>
</dbReference>
<dbReference type="PDBsum" id="1YRV"/>
<dbReference type="SMR" id="Q5VVX9"/>
<dbReference type="BioGRID" id="127156">
    <property type="interactions" value="141"/>
</dbReference>
<dbReference type="FunCoup" id="Q5VVX9">
    <property type="interactions" value="204"/>
</dbReference>
<dbReference type="IntAct" id="Q5VVX9">
    <property type="interactions" value="138"/>
</dbReference>
<dbReference type="MINT" id="Q5VVX9"/>
<dbReference type="STRING" id="9606.ENSP00000360116"/>
<dbReference type="MoonDB" id="Q5VVX9">
    <property type="type" value="Predicted"/>
</dbReference>
<dbReference type="iPTMnet" id="Q5VVX9"/>
<dbReference type="PhosphoSitePlus" id="Q5VVX9"/>
<dbReference type="BioMuta" id="UBE2U"/>
<dbReference type="DMDM" id="74747311"/>
<dbReference type="jPOST" id="Q5VVX9"/>
<dbReference type="MassIVE" id="Q5VVX9"/>
<dbReference type="PaxDb" id="9606-ENSP00000360116"/>
<dbReference type="PeptideAtlas" id="Q5VVX9"/>
<dbReference type="ProteomicsDB" id="65500">
    <molecule id="Q5VVX9-1"/>
</dbReference>
<dbReference type="Antibodypedia" id="19528">
    <property type="antibodies" value="159 antibodies from 26 providers"/>
</dbReference>
<dbReference type="DNASU" id="148581"/>
<dbReference type="Ensembl" id="ENST00000371076.7">
    <molecule id="Q5VVX9-2"/>
    <property type="protein sequence ID" value="ENSP00000360116.3"/>
    <property type="gene ID" value="ENSG00000177414.14"/>
</dbReference>
<dbReference type="Ensembl" id="ENST00000611228.4">
    <molecule id="Q5VVX9-1"/>
    <property type="protein sequence ID" value="ENSP00000481174.1"/>
    <property type="gene ID" value="ENSG00000177414.14"/>
</dbReference>
<dbReference type="GeneID" id="148581"/>
<dbReference type="KEGG" id="hsa:148581"/>
<dbReference type="UCSC" id="uc001dbn.1">
    <molecule id="Q5VVX9-1"/>
    <property type="organism name" value="human"/>
</dbReference>
<dbReference type="AGR" id="HGNC:28559"/>
<dbReference type="CTD" id="148581"/>
<dbReference type="DisGeNET" id="148581"/>
<dbReference type="GeneCards" id="UBE2U"/>
<dbReference type="HGNC" id="HGNC:28559">
    <property type="gene designation" value="UBE2U"/>
</dbReference>
<dbReference type="HPA" id="ENSG00000177414">
    <property type="expression patterns" value="Tissue enriched (testis)"/>
</dbReference>
<dbReference type="neXtProt" id="NX_Q5VVX9"/>
<dbReference type="OpenTargets" id="ENSG00000177414"/>
<dbReference type="PharmGKB" id="PA142670656"/>
<dbReference type="VEuPathDB" id="HostDB:ENSG00000177414"/>
<dbReference type="eggNOG" id="KOG0419">
    <property type="taxonomic scope" value="Eukaryota"/>
</dbReference>
<dbReference type="GeneTree" id="ENSGT00940000162256"/>
<dbReference type="HOGENOM" id="CLU_076373_0_0_1"/>
<dbReference type="InParanoid" id="Q5VVX9"/>
<dbReference type="OMA" id="SEDMMQW"/>
<dbReference type="OrthoDB" id="9978460at2759"/>
<dbReference type="PAN-GO" id="Q5VVX9">
    <property type="GO annotations" value="6 GO annotations based on evolutionary models"/>
</dbReference>
<dbReference type="PhylomeDB" id="Q5VVX9"/>
<dbReference type="TreeFam" id="TF329302"/>
<dbReference type="BRENDA" id="2.3.2.23">
    <property type="organism ID" value="2681"/>
</dbReference>
<dbReference type="PathwayCommons" id="Q5VVX9"/>
<dbReference type="Reactome" id="R-HSA-983168">
    <property type="pathway name" value="Antigen processing: Ubiquitination &amp; Proteasome degradation"/>
</dbReference>
<dbReference type="SignaLink" id="Q5VVX9"/>
<dbReference type="SIGNOR" id="Q5VVX9"/>
<dbReference type="UniPathway" id="UPA00143"/>
<dbReference type="BioGRID-ORCS" id="148581">
    <property type="hits" value="9 hits in 1119 CRISPR screens"/>
</dbReference>
<dbReference type="EvolutionaryTrace" id="Q5VVX9"/>
<dbReference type="GenomeRNAi" id="148581"/>
<dbReference type="Pharos" id="Q5VVX9">
    <property type="development level" value="Tdark"/>
</dbReference>
<dbReference type="PRO" id="PR:Q5VVX9"/>
<dbReference type="Proteomes" id="UP000005640">
    <property type="component" value="Chromosome 1"/>
</dbReference>
<dbReference type="RNAct" id="Q5VVX9">
    <property type="molecule type" value="protein"/>
</dbReference>
<dbReference type="Bgee" id="ENSG00000177414">
    <property type="expression patterns" value="Expressed in sperm and 87 other cell types or tissues"/>
</dbReference>
<dbReference type="ExpressionAtlas" id="Q5VVX9">
    <property type="expression patterns" value="baseline and differential"/>
</dbReference>
<dbReference type="GO" id="GO:0033503">
    <property type="term" value="C:HULC complex"/>
    <property type="evidence" value="ECO:0000318"/>
    <property type="project" value="GO_Central"/>
</dbReference>
<dbReference type="GO" id="GO:0005524">
    <property type="term" value="F:ATP binding"/>
    <property type="evidence" value="ECO:0007669"/>
    <property type="project" value="UniProtKB-KW"/>
</dbReference>
<dbReference type="GO" id="GO:0061631">
    <property type="term" value="F:ubiquitin conjugating enzyme activity"/>
    <property type="evidence" value="ECO:0000318"/>
    <property type="project" value="GO_Central"/>
</dbReference>
<dbReference type="GO" id="GO:0006281">
    <property type="term" value="P:DNA repair"/>
    <property type="evidence" value="ECO:0000318"/>
    <property type="project" value="GO_Central"/>
</dbReference>
<dbReference type="GO" id="GO:0043161">
    <property type="term" value="P:proteasome-mediated ubiquitin-dependent protein catabolic process"/>
    <property type="evidence" value="ECO:0000318"/>
    <property type="project" value="GO_Central"/>
</dbReference>
<dbReference type="GO" id="GO:0000209">
    <property type="term" value="P:protein polyubiquitination"/>
    <property type="evidence" value="ECO:0000318"/>
    <property type="project" value="GO_Central"/>
</dbReference>
<dbReference type="CDD" id="cd23806">
    <property type="entry name" value="UBCc_UBE2U"/>
    <property type="match status" value="1"/>
</dbReference>
<dbReference type="FunFam" id="3.10.110.10:FF:000067">
    <property type="entry name" value="ubiquitin-conjugating enzyme E2 U isoform X1"/>
    <property type="match status" value="1"/>
</dbReference>
<dbReference type="Gene3D" id="3.10.110.10">
    <property type="entry name" value="Ubiquitin Conjugating Enzyme"/>
    <property type="match status" value="1"/>
</dbReference>
<dbReference type="IDEAL" id="IID00638"/>
<dbReference type="InterPro" id="IPR050113">
    <property type="entry name" value="Ub_conjugating_enzyme"/>
</dbReference>
<dbReference type="InterPro" id="IPR000608">
    <property type="entry name" value="UBQ-conjugat_E2_core"/>
</dbReference>
<dbReference type="InterPro" id="IPR023313">
    <property type="entry name" value="UBQ-conjugating_AS"/>
</dbReference>
<dbReference type="InterPro" id="IPR016135">
    <property type="entry name" value="UBQ-conjugating_enzyme/RWD"/>
</dbReference>
<dbReference type="PANTHER" id="PTHR24067">
    <property type="entry name" value="UBIQUITIN-CONJUGATING ENZYME E2"/>
    <property type="match status" value="1"/>
</dbReference>
<dbReference type="Pfam" id="PF00179">
    <property type="entry name" value="UQ_con"/>
    <property type="match status" value="1"/>
</dbReference>
<dbReference type="SMART" id="SM00212">
    <property type="entry name" value="UBCc"/>
    <property type="match status" value="1"/>
</dbReference>
<dbReference type="SUPFAM" id="SSF54495">
    <property type="entry name" value="UBC-like"/>
    <property type="match status" value="1"/>
</dbReference>
<dbReference type="PROSITE" id="PS00183">
    <property type="entry name" value="UBC_1"/>
    <property type="match status" value="1"/>
</dbReference>
<dbReference type="PROSITE" id="PS50127">
    <property type="entry name" value="UBC_2"/>
    <property type="match status" value="1"/>
</dbReference>